<name>YABA_STRPC</name>
<proteinExistence type="inferred from homology"/>
<feature type="chain" id="PRO_1000065588" description="Replication initiation control protein YabA">
    <location>
        <begin position="1"/>
        <end position="107"/>
    </location>
</feature>
<feature type="binding site" evidence="1">
    <location>
        <position position="81"/>
    </location>
    <ligand>
        <name>Zn(2+)</name>
        <dbReference type="ChEBI" id="CHEBI:29105"/>
    </ligand>
</feature>
<feature type="binding site" evidence="1">
    <location>
        <position position="83"/>
    </location>
    <ligand>
        <name>Zn(2+)</name>
        <dbReference type="ChEBI" id="CHEBI:29105"/>
    </ligand>
</feature>
<feature type="binding site" evidence="1">
    <location>
        <position position="97"/>
    </location>
    <ligand>
        <name>Zn(2+)</name>
        <dbReference type="ChEBI" id="CHEBI:29105"/>
    </ligand>
</feature>
<feature type="binding site" evidence="1">
    <location>
        <position position="100"/>
    </location>
    <ligand>
        <name>Zn(2+)</name>
        <dbReference type="ChEBI" id="CHEBI:29105"/>
    </ligand>
</feature>
<keyword id="KW-0963">Cytoplasm</keyword>
<keyword id="KW-0235">DNA replication</keyword>
<keyword id="KW-0236">DNA replication inhibitor</keyword>
<keyword id="KW-0479">Metal-binding</keyword>
<keyword id="KW-0862">Zinc</keyword>
<organism>
    <name type="scientific">Streptococcus pyogenes serotype M12 (strain MGAS9429)</name>
    <dbReference type="NCBI Taxonomy" id="370551"/>
    <lineage>
        <taxon>Bacteria</taxon>
        <taxon>Bacillati</taxon>
        <taxon>Bacillota</taxon>
        <taxon>Bacilli</taxon>
        <taxon>Lactobacillales</taxon>
        <taxon>Streptococcaceae</taxon>
        <taxon>Streptococcus</taxon>
    </lineage>
</organism>
<accession>Q1JN74</accession>
<comment type="function">
    <text evidence="1">Involved in control of chromosome replication initiation. Inhibits the cooperative binding of DnaA to the oriC region, thus negatively regulating initiation of chromosome replication. Inhibits the ability of DnaA-ATP to form a helix on DNA; does not disassemble preformed DnaA-DNA helices. Decreases the residence time of DnaA on the chromosome at its binding sites (oriC, replication forks and promoter-binding sites). Tethers DnaA to the replication machinery via the DNA polymerase beta sliding clamp subunit (dnaN). Associates with oriC and other DnaA targets on the chromosome in a DnaA-dependent manner.</text>
</comment>
<comment type="cofactor">
    <cofactor evidence="1">
        <name>Zn(2+)</name>
        <dbReference type="ChEBI" id="CHEBI:29105"/>
    </cofactor>
    <text evidence="1">Binds 1 zinc ion per subunit.</text>
</comment>
<comment type="subunit">
    <text evidence="1">Homotetramer. Interacts with both DnaA and DnaN, acting as a bridge between these two proteins.</text>
</comment>
<comment type="subcellular location">
    <subcellularLocation>
        <location evidence="1">Cytoplasm</location>
        <location evidence="1">Nucleoid</location>
    </subcellularLocation>
    <text evidence="1">Localizes in tight foci, which correspond to the replisome at mid-cell throughout the cell cycle.</text>
</comment>
<comment type="similarity">
    <text evidence="1">Belongs to the YabA family.</text>
</comment>
<protein>
    <recommendedName>
        <fullName evidence="1">Replication initiation control protein YabA</fullName>
    </recommendedName>
</protein>
<sequence length="107" mass="12797">MNKKELFDAFDGFSQNLMVTLAEIEAMKKQVQSLVEENTILRLENTKLRERLSHLEHETVAKNPSKQRKDHLEGIYDEGFHICNFFYGQRRENDEECMFCRELLDRK</sequence>
<gene>
    <name evidence="1" type="primary">yabA</name>
    <name type="ordered locus">MGAS9429_Spy0337</name>
</gene>
<dbReference type="EMBL" id="CP000259">
    <property type="protein sequence ID" value="ABF31525.1"/>
    <property type="molecule type" value="Genomic_DNA"/>
</dbReference>
<dbReference type="RefSeq" id="WP_002985838.1">
    <property type="nucleotide sequence ID" value="NC_008021.1"/>
</dbReference>
<dbReference type="SMR" id="Q1JN74"/>
<dbReference type="GeneID" id="69901336"/>
<dbReference type="KEGG" id="spk:MGAS9429_Spy0337"/>
<dbReference type="HOGENOM" id="CLU_157169_0_0_9"/>
<dbReference type="Proteomes" id="UP000002433">
    <property type="component" value="Chromosome"/>
</dbReference>
<dbReference type="GO" id="GO:0009295">
    <property type="term" value="C:nucleoid"/>
    <property type="evidence" value="ECO:0007669"/>
    <property type="project" value="UniProtKB-SubCell"/>
</dbReference>
<dbReference type="GO" id="GO:0006260">
    <property type="term" value="P:DNA replication"/>
    <property type="evidence" value="ECO:0007669"/>
    <property type="project" value="UniProtKB-UniRule"/>
</dbReference>
<dbReference type="HAMAP" id="MF_01159">
    <property type="entry name" value="YabA"/>
    <property type="match status" value="1"/>
</dbReference>
<dbReference type="InterPro" id="IPR010377">
    <property type="entry name" value="YabA"/>
</dbReference>
<dbReference type="NCBIfam" id="NF009640">
    <property type="entry name" value="PRK13169.1-1"/>
    <property type="match status" value="1"/>
</dbReference>
<dbReference type="Pfam" id="PF06156">
    <property type="entry name" value="YabA"/>
    <property type="match status" value="1"/>
</dbReference>
<dbReference type="PIRSF" id="PIRSF021439">
    <property type="entry name" value="DUF972"/>
    <property type="match status" value="1"/>
</dbReference>
<reference key="1">
    <citation type="journal article" date="2006" name="Proc. Natl. Acad. Sci. U.S.A.">
        <title>Molecular genetic anatomy of inter- and intraserotype variation in the human bacterial pathogen group A Streptococcus.</title>
        <authorList>
            <person name="Beres S.B."/>
            <person name="Richter E.W."/>
            <person name="Nagiec M.J."/>
            <person name="Sumby P."/>
            <person name="Porcella S.F."/>
            <person name="DeLeo F.R."/>
            <person name="Musser J.M."/>
        </authorList>
    </citation>
    <scope>NUCLEOTIDE SEQUENCE [LARGE SCALE GENOMIC DNA]</scope>
    <source>
        <strain>MGAS9429</strain>
    </source>
</reference>
<evidence type="ECO:0000255" key="1">
    <source>
        <dbReference type="HAMAP-Rule" id="MF_01159"/>
    </source>
</evidence>